<name>DNAK_MYCVP</name>
<keyword id="KW-0067">ATP-binding</keyword>
<keyword id="KW-0143">Chaperone</keyword>
<keyword id="KW-0547">Nucleotide-binding</keyword>
<keyword id="KW-0597">Phosphoprotein</keyword>
<keyword id="KW-0346">Stress response</keyword>
<comment type="function">
    <text evidence="1">Acts as a chaperone.</text>
</comment>
<comment type="induction">
    <text evidence="1">By stress conditions e.g. heat shock.</text>
</comment>
<comment type="similarity">
    <text evidence="1">Belongs to the heat shock protein 70 family.</text>
</comment>
<gene>
    <name evidence="1" type="primary">dnaK</name>
    <name type="ordered locus">Mvan_0634</name>
</gene>
<evidence type="ECO:0000255" key="1">
    <source>
        <dbReference type="HAMAP-Rule" id="MF_00332"/>
    </source>
</evidence>
<evidence type="ECO:0000256" key="2">
    <source>
        <dbReference type="SAM" id="MobiDB-lite"/>
    </source>
</evidence>
<reference key="1">
    <citation type="submission" date="2006-12" db="EMBL/GenBank/DDBJ databases">
        <title>Complete sequence of Mycobacterium vanbaalenii PYR-1.</title>
        <authorList>
            <consortium name="US DOE Joint Genome Institute"/>
            <person name="Copeland A."/>
            <person name="Lucas S."/>
            <person name="Lapidus A."/>
            <person name="Barry K."/>
            <person name="Detter J.C."/>
            <person name="Glavina del Rio T."/>
            <person name="Hammon N."/>
            <person name="Israni S."/>
            <person name="Dalin E."/>
            <person name="Tice H."/>
            <person name="Pitluck S."/>
            <person name="Singan V."/>
            <person name="Schmutz J."/>
            <person name="Larimer F."/>
            <person name="Land M."/>
            <person name="Hauser L."/>
            <person name="Kyrpides N."/>
            <person name="Anderson I.J."/>
            <person name="Miller C."/>
            <person name="Richardson P."/>
        </authorList>
    </citation>
    <scope>NUCLEOTIDE SEQUENCE [LARGE SCALE GENOMIC DNA]</scope>
    <source>
        <strain>DSM 7251 / JCM 13017 / BCRC 16820 / KCTC 9966 / NRRL B-24157 / PYR-1</strain>
    </source>
</reference>
<dbReference type="EMBL" id="CP000511">
    <property type="protein sequence ID" value="ABM11473.1"/>
    <property type="molecule type" value="Genomic_DNA"/>
</dbReference>
<dbReference type="RefSeq" id="WP_011777910.1">
    <property type="nucleotide sequence ID" value="NZ_JACKSD010000157.1"/>
</dbReference>
<dbReference type="SMR" id="A1T2S3"/>
<dbReference type="STRING" id="350058.Mvan_0634"/>
<dbReference type="KEGG" id="mva:Mvan_0634"/>
<dbReference type="eggNOG" id="COG0443">
    <property type="taxonomic scope" value="Bacteria"/>
</dbReference>
<dbReference type="HOGENOM" id="CLU_005965_2_1_11"/>
<dbReference type="Proteomes" id="UP000009159">
    <property type="component" value="Chromosome"/>
</dbReference>
<dbReference type="GO" id="GO:0005524">
    <property type="term" value="F:ATP binding"/>
    <property type="evidence" value="ECO:0007669"/>
    <property type="project" value="UniProtKB-UniRule"/>
</dbReference>
<dbReference type="GO" id="GO:0140662">
    <property type="term" value="F:ATP-dependent protein folding chaperone"/>
    <property type="evidence" value="ECO:0007669"/>
    <property type="project" value="InterPro"/>
</dbReference>
<dbReference type="GO" id="GO:0051082">
    <property type="term" value="F:unfolded protein binding"/>
    <property type="evidence" value="ECO:0007669"/>
    <property type="project" value="InterPro"/>
</dbReference>
<dbReference type="CDD" id="cd10234">
    <property type="entry name" value="ASKHA_NBD_HSP70_DnaK-like"/>
    <property type="match status" value="1"/>
</dbReference>
<dbReference type="FunFam" id="2.60.34.10:FF:000014">
    <property type="entry name" value="Chaperone protein DnaK HSP70"/>
    <property type="match status" value="1"/>
</dbReference>
<dbReference type="FunFam" id="1.20.1270.10:FF:000001">
    <property type="entry name" value="Molecular chaperone DnaK"/>
    <property type="match status" value="1"/>
</dbReference>
<dbReference type="FunFam" id="3.30.420.40:FF:000071">
    <property type="entry name" value="Molecular chaperone DnaK"/>
    <property type="match status" value="1"/>
</dbReference>
<dbReference type="FunFam" id="3.90.640.10:FF:000003">
    <property type="entry name" value="Molecular chaperone DnaK"/>
    <property type="match status" value="1"/>
</dbReference>
<dbReference type="Gene3D" id="1.20.1270.10">
    <property type="match status" value="1"/>
</dbReference>
<dbReference type="Gene3D" id="3.30.420.40">
    <property type="match status" value="2"/>
</dbReference>
<dbReference type="Gene3D" id="3.90.640.10">
    <property type="entry name" value="Actin, Chain A, domain 4"/>
    <property type="match status" value="1"/>
</dbReference>
<dbReference type="Gene3D" id="2.60.34.10">
    <property type="entry name" value="Substrate Binding Domain Of DNAk, Chain A, domain 1"/>
    <property type="match status" value="1"/>
</dbReference>
<dbReference type="HAMAP" id="MF_00332">
    <property type="entry name" value="DnaK"/>
    <property type="match status" value="1"/>
</dbReference>
<dbReference type="InterPro" id="IPR043129">
    <property type="entry name" value="ATPase_NBD"/>
</dbReference>
<dbReference type="InterPro" id="IPR012725">
    <property type="entry name" value="Chaperone_DnaK"/>
</dbReference>
<dbReference type="InterPro" id="IPR018181">
    <property type="entry name" value="Heat_shock_70_CS"/>
</dbReference>
<dbReference type="InterPro" id="IPR029048">
    <property type="entry name" value="HSP70_C_sf"/>
</dbReference>
<dbReference type="InterPro" id="IPR029047">
    <property type="entry name" value="HSP70_peptide-bd_sf"/>
</dbReference>
<dbReference type="InterPro" id="IPR013126">
    <property type="entry name" value="Hsp_70_fam"/>
</dbReference>
<dbReference type="NCBIfam" id="NF001413">
    <property type="entry name" value="PRK00290.1"/>
    <property type="match status" value="1"/>
</dbReference>
<dbReference type="NCBIfam" id="TIGR02350">
    <property type="entry name" value="prok_dnaK"/>
    <property type="match status" value="1"/>
</dbReference>
<dbReference type="PANTHER" id="PTHR19375">
    <property type="entry name" value="HEAT SHOCK PROTEIN 70KDA"/>
    <property type="match status" value="1"/>
</dbReference>
<dbReference type="Pfam" id="PF00012">
    <property type="entry name" value="HSP70"/>
    <property type="match status" value="1"/>
</dbReference>
<dbReference type="PRINTS" id="PR00301">
    <property type="entry name" value="HEATSHOCK70"/>
</dbReference>
<dbReference type="SUPFAM" id="SSF53067">
    <property type="entry name" value="Actin-like ATPase domain"/>
    <property type="match status" value="2"/>
</dbReference>
<dbReference type="SUPFAM" id="SSF100934">
    <property type="entry name" value="Heat shock protein 70kD (HSP70), C-terminal subdomain"/>
    <property type="match status" value="1"/>
</dbReference>
<dbReference type="SUPFAM" id="SSF100920">
    <property type="entry name" value="Heat shock protein 70kD (HSP70), peptide-binding domain"/>
    <property type="match status" value="1"/>
</dbReference>
<dbReference type="PROSITE" id="PS00297">
    <property type="entry name" value="HSP70_1"/>
    <property type="match status" value="1"/>
</dbReference>
<dbReference type="PROSITE" id="PS00329">
    <property type="entry name" value="HSP70_2"/>
    <property type="match status" value="1"/>
</dbReference>
<dbReference type="PROSITE" id="PS01036">
    <property type="entry name" value="HSP70_3"/>
    <property type="match status" value="1"/>
</dbReference>
<proteinExistence type="inferred from homology"/>
<organism>
    <name type="scientific">Mycolicibacterium vanbaalenii (strain DSM 7251 / JCM 13017 / BCRC 16820 / KCTC 9966 / NRRL B-24157 / PYR-1)</name>
    <name type="common">Mycobacterium vanbaalenii</name>
    <dbReference type="NCBI Taxonomy" id="350058"/>
    <lineage>
        <taxon>Bacteria</taxon>
        <taxon>Bacillati</taxon>
        <taxon>Actinomycetota</taxon>
        <taxon>Actinomycetes</taxon>
        <taxon>Mycobacteriales</taxon>
        <taxon>Mycobacteriaceae</taxon>
        <taxon>Mycolicibacterium</taxon>
    </lineage>
</organism>
<protein>
    <recommendedName>
        <fullName evidence="1">Chaperone protein DnaK</fullName>
    </recommendedName>
    <alternativeName>
        <fullName evidence="1">HSP70</fullName>
    </alternativeName>
    <alternativeName>
        <fullName evidence="1">Heat shock 70 kDa protein</fullName>
    </alternativeName>
    <alternativeName>
        <fullName evidence="1">Heat shock protein 70</fullName>
    </alternativeName>
</protein>
<feature type="chain" id="PRO_1000059613" description="Chaperone protein DnaK">
    <location>
        <begin position="1"/>
        <end position="622"/>
    </location>
</feature>
<feature type="region of interest" description="Disordered" evidence="2">
    <location>
        <begin position="588"/>
        <end position="622"/>
    </location>
</feature>
<feature type="compositionally biased region" description="Acidic residues" evidence="2">
    <location>
        <begin position="608"/>
        <end position="622"/>
    </location>
</feature>
<feature type="modified residue" description="Phosphothreonine; by autocatalysis" evidence="1">
    <location>
        <position position="175"/>
    </location>
</feature>
<accession>A1T2S3</accession>
<sequence>MARAVGIDLGTTNSVVAVLEGGDPVVVANSEGSRTTPSVVAFARNGEVLVGQPAKNQAVTNVDRTIRSVKRHMGSDWTVKIDDKDYTPQEISARVLMKLKRDAESYLGEDITDAVITVPAYFNDAQRQATKEAGQIAGLNVLRIVNEPTAAALAYGLDKGEKEQTILVFDLGGGTFDVSLLEIGEGVVEVRATSGDNHLGGDDWDDRIVEWLVDKFKGTSGIDLTKDKMAMQRLREAAEKAKIELSSSQSTSINLPYITVDADKNPLFLDEQLTRAEFQRITQDLLDRTRKPFQQVIKDAGIAVGDIDHVVLVGGSTRMPAVTELVKEMTGGQEPNKGVNPDEVVAVGAALQAGVLKGEVKDVLLLDVTPLSLGIETKGGVMTKLIERNTTIPTKRSETFTTADDNQPSVQIQVFQGEREIAAHNKLLGSFELTGIPPAPRGVPQIEVTFDIDANGIVHVTAKDKGTGKENTIKIQEGSGLSKEEIDRMIKDAEAHADEDRQRREEADVRNQAESLVYQTEKFVKEQREAEGGSKVPEDTLTKVDSAIADAKTALAGTDIGAIKSAMEKLGEESQALGQAIYEATQAEQAAGGAAGGDSAGASGANDDVVDAEVVEDDQERK</sequence>